<accession>Q54KM7</accession>
<name>GCSP_DICDI</name>
<feature type="transit peptide" description="Mitochondrion" evidence="2">
    <location>
        <begin position="1"/>
        <end position="21"/>
    </location>
</feature>
<feature type="chain" id="PRO_0000327611" description="Glycine dehydrogenase (decarboxylating), mitochondrial">
    <location>
        <begin position="22"/>
        <end position="994"/>
    </location>
</feature>
<feature type="modified residue" description="N6-(pyridoxal phosphate)lysine" evidence="1">
    <location>
        <position position="742"/>
    </location>
</feature>
<protein>
    <recommendedName>
        <fullName>Glycine dehydrogenase (decarboxylating), mitochondrial</fullName>
        <ecNumber>1.4.4.2</ecNumber>
    </recommendedName>
    <alternativeName>
        <fullName>Glycine cleavage system P protein</fullName>
    </alternativeName>
    <alternativeName>
        <fullName>Glycine decarboxylase</fullName>
    </alternativeName>
    <alternativeName>
        <fullName>Glycine dehydrogenase (aminomethyl-transferring)</fullName>
    </alternativeName>
</protein>
<proteinExistence type="inferred from homology"/>
<dbReference type="EC" id="1.4.4.2"/>
<dbReference type="EMBL" id="AAFI02000099">
    <property type="protein sequence ID" value="EAL63829.1"/>
    <property type="molecule type" value="Genomic_DNA"/>
</dbReference>
<dbReference type="RefSeq" id="XP_637330.1">
    <property type="nucleotide sequence ID" value="XM_632238.1"/>
</dbReference>
<dbReference type="SMR" id="Q54KM7"/>
<dbReference type="FunCoup" id="Q54KM7">
    <property type="interactions" value="264"/>
</dbReference>
<dbReference type="STRING" id="44689.Q54KM7"/>
<dbReference type="GlyGen" id="Q54KM7">
    <property type="glycosylation" value="1 site"/>
</dbReference>
<dbReference type="PaxDb" id="44689-DDB0231130"/>
<dbReference type="EnsemblProtists" id="EAL63829">
    <property type="protein sequence ID" value="EAL63829"/>
    <property type="gene ID" value="DDB_G0287255"/>
</dbReference>
<dbReference type="GeneID" id="8626028"/>
<dbReference type="KEGG" id="ddi:DDB_G0287255"/>
<dbReference type="dictyBase" id="DDB_G0287255">
    <property type="gene designation" value="gcvP"/>
</dbReference>
<dbReference type="VEuPathDB" id="AmoebaDB:DDB_G0287255"/>
<dbReference type="eggNOG" id="KOG2040">
    <property type="taxonomic scope" value="Eukaryota"/>
</dbReference>
<dbReference type="HOGENOM" id="CLU_004620_3_2_1"/>
<dbReference type="InParanoid" id="Q54KM7"/>
<dbReference type="OMA" id="RNLICTC"/>
<dbReference type="PhylomeDB" id="Q54KM7"/>
<dbReference type="Reactome" id="R-DDI-6783984">
    <property type="pathway name" value="Glycine degradation"/>
</dbReference>
<dbReference type="PRO" id="PR:Q54KM7"/>
<dbReference type="Proteomes" id="UP000002195">
    <property type="component" value="Chromosome 5"/>
</dbReference>
<dbReference type="GO" id="GO:0005960">
    <property type="term" value="C:glycine cleavage complex"/>
    <property type="evidence" value="ECO:0000318"/>
    <property type="project" value="GO_Central"/>
</dbReference>
<dbReference type="GO" id="GO:0005739">
    <property type="term" value="C:mitochondrion"/>
    <property type="evidence" value="ECO:0000318"/>
    <property type="project" value="GO_Central"/>
</dbReference>
<dbReference type="GO" id="GO:0016594">
    <property type="term" value="F:glycine binding"/>
    <property type="evidence" value="ECO:0000318"/>
    <property type="project" value="GO_Central"/>
</dbReference>
<dbReference type="GO" id="GO:0004375">
    <property type="term" value="F:glycine dehydrogenase (decarboxylating) activity"/>
    <property type="evidence" value="ECO:0000318"/>
    <property type="project" value="GO_Central"/>
</dbReference>
<dbReference type="GO" id="GO:0030170">
    <property type="term" value="F:pyridoxal phosphate binding"/>
    <property type="evidence" value="ECO:0000318"/>
    <property type="project" value="GO_Central"/>
</dbReference>
<dbReference type="GO" id="GO:0019464">
    <property type="term" value="P:glycine decarboxylation via glycine cleavage system"/>
    <property type="evidence" value="ECO:0000318"/>
    <property type="project" value="GO_Central"/>
</dbReference>
<dbReference type="CDD" id="cd00613">
    <property type="entry name" value="GDC-P"/>
    <property type="match status" value="2"/>
</dbReference>
<dbReference type="FunFam" id="3.40.640.10:FF:000005">
    <property type="entry name" value="Glycine dehydrogenase (decarboxylating), mitochondrial"/>
    <property type="match status" value="1"/>
</dbReference>
<dbReference type="FunFam" id="3.90.1150.10:FF:000007">
    <property type="entry name" value="Glycine dehydrogenase (decarboxylating), mitochondrial"/>
    <property type="match status" value="1"/>
</dbReference>
<dbReference type="FunFam" id="3.40.640.10:FF:000007">
    <property type="entry name" value="glycine dehydrogenase (Decarboxylating), mitochondrial"/>
    <property type="match status" value="1"/>
</dbReference>
<dbReference type="Gene3D" id="3.90.1150.10">
    <property type="entry name" value="Aspartate Aminotransferase, domain 1"/>
    <property type="match status" value="2"/>
</dbReference>
<dbReference type="Gene3D" id="3.40.640.10">
    <property type="entry name" value="Type I PLP-dependent aspartate aminotransferase-like (Major domain)"/>
    <property type="match status" value="2"/>
</dbReference>
<dbReference type="HAMAP" id="MF_00711">
    <property type="entry name" value="GcvP"/>
    <property type="match status" value="1"/>
</dbReference>
<dbReference type="InterPro" id="IPR018247">
    <property type="entry name" value="EF_Hand_1_Ca_BS"/>
</dbReference>
<dbReference type="InterPro" id="IPR003437">
    <property type="entry name" value="GcvP"/>
</dbReference>
<dbReference type="InterPro" id="IPR049316">
    <property type="entry name" value="GDC-P_C"/>
</dbReference>
<dbReference type="InterPro" id="IPR049315">
    <property type="entry name" value="GDC-P_N"/>
</dbReference>
<dbReference type="InterPro" id="IPR020581">
    <property type="entry name" value="GDC_P"/>
</dbReference>
<dbReference type="InterPro" id="IPR015424">
    <property type="entry name" value="PyrdxlP-dep_Trfase"/>
</dbReference>
<dbReference type="InterPro" id="IPR015421">
    <property type="entry name" value="PyrdxlP-dep_Trfase_major"/>
</dbReference>
<dbReference type="InterPro" id="IPR015422">
    <property type="entry name" value="PyrdxlP-dep_Trfase_small"/>
</dbReference>
<dbReference type="NCBIfam" id="TIGR00461">
    <property type="entry name" value="gcvP"/>
    <property type="match status" value="1"/>
</dbReference>
<dbReference type="NCBIfam" id="NF003346">
    <property type="entry name" value="PRK04366.1"/>
    <property type="match status" value="1"/>
</dbReference>
<dbReference type="PANTHER" id="PTHR11773:SF1">
    <property type="entry name" value="GLYCINE DEHYDROGENASE (DECARBOXYLATING), MITOCHONDRIAL"/>
    <property type="match status" value="1"/>
</dbReference>
<dbReference type="PANTHER" id="PTHR11773">
    <property type="entry name" value="GLYCINE DEHYDROGENASE, DECARBOXYLATING"/>
    <property type="match status" value="1"/>
</dbReference>
<dbReference type="Pfam" id="PF21478">
    <property type="entry name" value="GcvP2_C"/>
    <property type="match status" value="1"/>
</dbReference>
<dbReference type="Pfam" id="PF02347">
    <property type="entry name" value="GDC-P"/>
    <property type="match status" value="2"/>
</dbReference>
<dbReference type="SUPFAM" id="SSF53383">
    <property type="entry name" value="PLP-dependent transferases"/>
    <property type="match status" value="2"/>
</dbReference>
<gene>
    <name type="primary">gcvP</name>
    <name type="ORF">DDB_G0287255</name>
</gene>
<keyword id="KW-0496">Mitochondrion</keyword>
<keyword id="KW-0560">Oxidoreductase</keyword>
<keyword id="KW-0663">Pyridoxal phosphate</keyword>
<keyword id="KW-1185">Reference proteome</keyword>
<keyword id="KW-0809">Transit peptide</keyword>
<comment type="function">
    <text evidence="1">The glycine cleavage system catalyzes the degradation of glycine. The P protein binds the alpha-amino group of glycine through its pyridoxal phosphate cofactor; CO(2) is released and the remaining methylamine moiety is then transferred to the lipoamide cofactor of the H protein (By similarity).</text>
</comment>
<comment type="catalytic activity">
    <reaction>
        <text>N(6)-[(R)-lipoyl]-L-lysyl-[glycine-cleavage complex H protein] + glycine + H(+) = N(6)-[(R)-S(8)-aminomethyldihydrolipoyl]-L-lysyl-[glycine-cleavage complex H protein] + CO2</text>
        <dbReference type="Rhea" id="RHEA:24304"/>
        <dbReference type="Rhea" id="RHEA-COMP:10494"/>
        <dbReference type="Rhea" id="RHEA-COMP:10495"/>
        <dbReference type="ChEBI" id="CHEBI:15378"/>
        <dbReference type="ChEBI" id="CHEBI:16526"/>
        <dbReference type="ChEBI" id="CHEBI:57305"/>
        <dbReference type="ChEBI" id="CHEBI:83099"/>
        <dbReference type="ChEBI" id="CHEBI:83143"/>
        <dbReference type="EC" id="1.4.4.2"/>
    </reaction>
</comment>
<comment type="cofactor">
    <cofactor evidence="1">
        <name>pyridoxal 5'-phosphate</name>
        <dbReference type="ChEBI" id="CHEBI:597326"/>
    </cofactor>
</comment>
<comment type="subunit">
    <text evidence="1">Homodimer. The glycine cleavage system is composed of four proteins: P, T, L and H.</text>
</comment>
<comment type="subcellular location">
    <subcellularLocation>
        <location evidence="1">Mitochondrion</location>
    </subcellularLocation>
</comment>
<comment type="similarity">
    <text evidence="3">Belongs to the GcvP family.</text>
</comment>
<sequence length="994" mass="109578">MLKLLRNNGINKLKSNLIRNYSTKQSIFQALDTFPKRHIGPNENEINEMLKSINTSKLSKKNPNSLEQLIEYTIPKDIRLNRELNIEENKVIGENQLLKDLKKIAEKNKVYRSFIGMGYYGTITPHVIQRNILENPGWYTPYTPYQAEISQGRLESLLNFQTMVSEFTGLPMSNASLLDEATAAAEAMQMCVNISKSKGPFAFLVDKYCHPQTIDTIKTRAEPKGIRIEVVDSKDFKFTEDVVGCIVQYPSSNGVITDYKEMADRAHQANALVVAATDLLSLALLKPPGEWGADIALGNSQRFGVPLGFGGPHAAFFSTKDKYARLLPGRIIGVSKDKQGNSAFRMALQTREQHIRREKATSNICTSQALLANMSAMYAVYHGQQGIKDIANAVHRKAIILAEGIKRLGYTVLDRPFFDTVLIITGDKTDMMIKELESRQINVRQYCSKSISISLDETVTSADISALLNGFSAHASKPLGLSSPEQLEKETSTISVISEEFARQTPFLTHPIFNRYHSEHELLRYIHKLQKKDLGLTTAMIPLGSCTMKLNATTEMYPVSWPEFNSIHPFVPANQSLGYKEMFESISNMLCEVTGFDGCSLQPNAGSQGEYAGLMVIRSYLTSIGQSQRNVCLIPVSAHGTNPASAAMVGMKVVVVDCDTNGNIDVADLKAKAEKHKDTLAALMITYPSTHGVFEEGANDICDIIHANGGQVYMDGANMNAQVGLCRPGDIGADVCHLNLHKTFCIPHGGGGPGMGPICVKSHLAPFLPGHSVVKGVGGERAMSAVSAGPWGSSSILPITYVYLKLMGGQGLKKATQVAILNANYMASRLKDHYKILYTGSHGLVAHEFIIDLRMFKESAGIEAEDVAKRLQDMNFHGPTMSWPVPNTLMIEPTESESKYELDRLCDALILIREEIREIETGKADRKNNVLVNSPHTEKVIVADNWNYPYSRSKAAFPTPATVASKFWPTVGRIDNVHGDKNLVCSCPPLSDYQ</sequence>
<reference key="1">
    <citation type="journal article" date="2005" name="Nature">
        <title>The genome of the social amoeba Dictyostelium discoideum.</title>
        <authorList>
            <person name="Eichinger L."/>
            <person name="Pachebat J.A."/>
            <person name="Gloeckner G."/>
            <person name="Rajandream M.A."/>
            <person name="Sucgang R."/>
            <person name="Berriman M."/>
            <person name="Song J."/>
            <person name="Olsen R."/>
            <person name="Szafranski K."/>
            <person name="Xu Q."/>
            <person name="Tunggal B."/>
            <person name="Kummerfeld S."/>
            <person name="Madera M."/>
            <person name="Konfortov B.A."/>
            <person name="Rivero F."/>
            <person name="Bankier A.T."/>
            <person name="Lehmann R."/>
            <person name="Hamlin N."/>
            <person name="Davies R."/>
            <person name="Gaudet P."/>
            <person name="Fey P."/>
            <person name="Pilcher K."/>
            <person name="Chen G."/>
            <person name="Saunders D."/>
            <person name="Sodergren E.J."/>
            <person name="Davis P."/>
            <person name="Kerhornou A."/>
            <person name="Nie X."/>
            <person name="Hall N."/>
            <person name="Anjard C."/>
            <person name="Hemphill L."/>
            <person name="Bason N."/>
            <person name="Farbrother P."/>
            <person name="Desany B."/>
            <person name="Just E."/>
            <person name="Morio T."/>
            <person name="Rost R."/>
            <person name="Churcher C.M."/>
            <person name="Cooper J."/>
            <person name="Haydock S."/>
            <person name="van Driessche N."/>
            <person name="Cronin A."/>
            <person name="Goodhead I."/>
            <person name="Muzny D.M."/>
            <person name="Mourier T."/>
            <person name="Pain A."/>
            <person name="Lu M."/>
            <person name="Harper D."/>
            <person name="Lindsay R."/>
            <person name="Hauser H."/>
            <person name="James K.D."/>
            <person name="Quiles M."/>
            <person name="Madan Babu M."/>
            <person name="Saito T."/>
            <person name="Buchrieser C."/>
            <person name="Wardroper A."/>
            <person name="Felder M."/>
            <person name="Thangavelu M."/>
            <person name="Johnson D."/>
            <person name="Knights A."/>
            <person name="Loulseged H."/>
            <person name="Mungall K.L."/>
            <person name="Oliver K."/>
            <person name="Price C."/>
            <person name="Quail M.A."/>
            <person name="Urushihara H."/>
            <person name="Hernandez J."/>
            <person name="Rabbinowitsch E."/>
            <person name="Steffen D."/>
            <person name="Sanders M."/>
            <person name="Ma J."/>
            <person name="Kohara Y."/>
            <person name="Sharp S."/>
            <person name="Simmonds M.N."/>
            <person name="Spiegler S."/>
            <person name="Tivey A."/>
            <person name="Sugano S."/>
            <person name="White B."/>
            <person name="Walker D."/>
            <person name="Woodward J.R."/>
            <person name="Winckler T."/>
            <person name="Tanaka Y."/>
            <person name="Shaulsky G."/>
            <person name="Schleicher M."/>
            <person name="Weinstock G.M."/>
            <person name="Rosenthal A."/>
            <person name="Cox E.C."/>
            <person name="Chisholm R.L."/>
            <person name="Gibbs R.A."/>
            <person name="Loomis W.F."/>
            <person name="Platzer M."/>
            <person name="Kay R.R."/>
            <person name="Williams J.G."/>
            <person name="Dear P.H."/>
            <person name="Noegel A.A."/>
            <person name="Barrell B.G."/>
            <person name="Kuspa A."/>
        </authorList>
    </citation>
    <scope>NUCLEOTIDE SEQUENCE [LARGE SCALE GENOMIC DNA]</scope>
    <source>
        <strain>AX4</strain>
    </source>
</reference>
<evidence type="ECO:0000250" key="1"/>
<evidence type="ECO:0000255" key="2"/>
<evidence type="ECO:0000305" key="3"/>
<organism>
    <name type="scientific">Dictyostelium discoideum</name>
    <name type="common">Social amoeba</name>
    <dbReference type="NCBI Taxonomy" id="44689"/>
    <lineage>
        <taxon>Eukaryota</taxon>
        <taxon>Amoebozoa</taxon>
        <taxon>Evosea</taxon>
        <taxon>Eumycetozoa</taxon>
        <taxon>Dictyostelia</taxon>
        <taxon>Dictyosteliales</taxon>
        <taxon>Dictyosteliaceae</taxon>
        <taxon>Dictyostelium</taxon>
    </lineage>
</organism>